<comment type="function">
    <text evidence="1">Intramembrane glycolipid transporter that operates in the biosynthetic pathway of dolichol-linked oligosaccharides, the glycan precursors employed in protein asparagine (N)-glycosylation. The sequential addition of sugars to dolichol pyrophosphate produces dolichol-linked oligosaccharides containing fourteen sugars, including two GlcNAcs, nine mannoses and three glucoses. Once assembled, the oligosaccharide is transferred from the lipid to nascent proteins by oligosaccharyltransferases. The assembly of dolichol-linked oligosaccharides begins on the cytosolic side of the endoplasmic reticulum membrane and finishes in its lumen. RFT1 could mediate the translocation of the cytosolically oriented intermediate DolPP-GlcNAc2Man5, produced by ALG11, into the ER lumen where dolichol-linked oligosaccharides assembly continues. However, the intramembrane lipid transporter activity could not be confirmed in vitro.</text>
</comment>
<comment type="pathway">
    <text evidence="1">Protein modification; protein glycosylation.</text>
</comment>
<comment type="subcellular location">
    <subcellularLocation>
        <location evidence="1">Endoplasmic reticulum membrane</location>
        <topology evidence="2">Multi-pass membrane protein</topology>
    </subcellularLocation>
</comment>
<comment type="similarity">
    <text evidence="3">Belongs to the RFT1 family.</text>
</comment>
<evidence type="ECO:0000250" key="1">
    <source>
        <dbReference type="UniProtKB" id="P38206"/>
    </source>
</evidence>
<evidence type="ECO:0000255" key="2"/>
<evidence type="ECO:0000305" key="3"/>
<reference key="1">
    <citation type="journal article" date="2004" name="Nature">
        <title>Genome evolution in yeasts.</title>
        <authorList>
            <person name="Dujon B."/>
            <person name="Sherman D."/>
            <person name="Fischer G."/>
            <person name="Durrens P."/>
            <person name="Casaregola S."/>
            <person name="Lafontaine I."/>
            <person name="de Montigny J."/>
            <person name="Marck C."/>
            <person name="Neuveglise C."/>
            <person name="Talla E."/>
            <person name="Goffard N."/>
            <person name="Frangeul L."/>
            <person name="Aigle M."/>
            <person name="Anthouard V."/>
            <person name="Babour A."/>
            <person name="Barbe V."/>
            <person name="Barnay S."/>
            <person name="Blanchin S."/>
            <person name="Beckerich J.-M."/>
            <person name="Beyne E."/>
            <person name="Bleykasten C."/>
            <person name="Boisrame A."/>
            <person name="Boyer J."/>
            <person name="Cattolico L."/>
            <person name="Confanioleri F."/>
            <person name="de Daruvar A."/>
            <person name="Despons L."/>
            <person name="Fabre E."/>
            <person name="Fairhead C."/>
            <person name="Ferry-Dumazet H."/>
            <person name="Groppi A."/>
            <person name="Hantraye F."/>
            <person name="Hennequin C."/>
            <person name="Jauniaux N."/>
            <person name="Joyet P."/>
            <person name="Kachouri R."/>
            <person name="Kerrest A."/>
            <person name="Koszul R."/>
            <person name="Lemaire M."/>
            <person name="Lesur I."/>
            <person name="Ma L."/>
            <person name="Muller H."/>
            <person name="Nicaud J.-M."/>
            <person name="Nikolski M."/>
            <person name="Oztas S."/>
            <person name="Ozier-Kalogeropoulos O."/>
            <person name="Pellenz S."/>
            <person name="Potier S."/>
            <person name="Richard G.-F."/>
            <person name="Straub M.-L."/>
            <person name="Suleau A."/>
            <person name="Swennen D."/>
            <person name="Tekaia F."/>
            <person name="Wesolowski-Louvel M."/>
            <person name="Westhof E."/>
            <person name="Wirth B."/>
            <person name="Zeniou-Meyer M."/>
            <person name="Zivanovic Y."/>
            <person name="Bolotin-Fukuhara M."/>
            <person name="Thierry A."/>
            <person name="Bouchier C."/>
            <person name="Caudron B."/>
            <person name="Scarpelli C."/>
            <person name="Gaillardin C."/>
            <person name="Weissenbach J."/>
            <person name="Wincker P."/>
            <person name="Souciet J.-L."/>
        </authorList>
    </citation>
    <scope>NUCLEOTIDE SEQUENCE [LARGE SCALE GENOMIC DNA]</scope>
    <source>
        <strain>ATCC 8585 / CBS 2359 / DSM 70799 / NBRC 1267 / NRRL Y-1140 / WM37</strain>
    </source>
</reference>
<reference key="2">
    <citation type="journal article" date="1994" name="Mol. Gen. Genet.">
        <title>Sequence of the HAP3 transcription factor of Kluyveromyces lactis predicts the presence of a novel 4-cysteine zinc-finger motif.</title>
        <authorList>
            <person name="Mulder W."/>
            <person name="Scholten I.H.J.M."/>
            <person name="de Boer R.W."/>
            <person name="Grivell L.A."/>
        </authorList>
    </citation>
    <scope>NUCLEOTIDE SEQUENCE [GENOMIC DNA] OF 1-417</scope>
</reference>
<protein>
    <recommendedName>
        <fullName evidence="1">Man(5)GlcNAc(2)-PP-dolichol translocation protein RFT1</fullName>
    </recommendedName>
</protein>
<name>RFT1_KLULA</name>
<sequence length="556" mass="64214">MNVKNEHMNKFANGVLFLMLGQTLSKGVNFLLNTLLVRYLSPRIFGITSFLEFLLSTVLFFSRESIRISTLRIKSTTDSGKLEKVEDGEDTRTLQSLINFGYIPFVIGLPLSIILISWQYSNLNSYFIDLPYFKASIFLIWLSILIELVSEPFYLVHQYLLNHFIRSKYESLGVTFACVANFIIVVWFEKMVNGVGLELHDDYKQEGIAIFAFAVGKLVHAMTLLACYSYNYYSEVYTTGERYSYKLTKIRPETRQESYYFQNDTVQHFKKVYFQLCFKHLLTEGDKLIINSLCTVEEQGIYSLLSNYGSLITRLLFAPIEEALRLFLARLLSVSSKKNLWLSMKVLIDLTKFYLYLSLFIIIFGPINSSYLLKFVIGSKWSSTSFLETIRTYCFYIPFLSLNGIFEAFFQSVASGDQIFKHSYVMMLFSGIFLFNCWLFIEYFDLSLEGLIVSNILNMALRIAYCGNFIHKFYHYLLKESSTETTQSILPNISTFKNVALIAAIIGALDWYFIGYVENMRELLINVILALLLLILVIYKEKSLISELLAAKTYAA</sequence>
<organism>
    <name type="scientific">Kluyveromyces lactis (strain ATCC 8585 / CBS 2359 / DSM 70799 / NBRC 1267 / NRRL Y-1140 / WM37)</name>
    <name type="common">Yeast</name>
    <name type="synonym">Candida sphaerica</name>
    <dbReference type="NCBI Taxonomy" id="284590"/>
    <lineage>
        <taxon>Eukaryota</taxon>
        <taxon>Fungi</taxon>
        <taxon>Dikarya</taxon>
        <taxon>Ascomycota</taxon>
        <taxon>Saccharomycotina</taxon>
        <taxon>Saccharomycetes</taxon>
        <taxon>Saccharomycetales</taxon>
        <taxon>Saccharomycetaceae</taxon>
        <taxon>Kluyveromyces</taxon>
    </lineage>
</organism>
<dbReference type="EMBL" id="CR382125">
    <property type="protein sequence ID" value="CAG99509.1"/>
    <property type="molecule type" value="Genomic_DNA"/>
</dbReference>
<dbReference type="EMBL" id="L25779">
    <property type="protein sequence ID" value="AAC41661.1"/>
    <property type="molecule type" value="Genomic_DNA"/>
</dbReference>
<dbReference type="PIR" id="S51564">
    <property type="entry name" value="S51564"/>
</dbReference>
<dbReference type="RefSeq" id="XP_454422.1">
    <property type="nucleotide sequence ID" value="XM_454422.1"/>
</dbReference>
<dbReference type="SMR" id="P40913"/>
<dbReference type="FunCoup" id="P40913">
    <property type="interactions" value="720"/>
</dbReference>
<dbReference type="STRING" id="284590.P40913"/>
<dbReference type="PaxDb" id="284590-P40913"/>
<dbReference type="KEGG" id="kla:KLLA0_E10451g"/>
<dbReference type="eggNOG" id="KOG2864">
    <property type="taxonomic scope" value="Eukaryota"/>
</dbReference>
<dbReference type="HOGENOM" id="CLU_023360_3_0_1"/>
<dbReference type="InParanoid" id="P40913"/>
<dbReference type="OMA" id="WPGKLFG"/>
<dbReference type="UniPathway" id="UPA00378"/>
<dbReference type="Proteomes" id="UP000000598">
    <property type="component" value="Chromosome E"/>
</dbReference>
<dbReference type="GO" id="GO:0005789">
    <property type="term" value="C:endoplasmic reticulum membrane"/>
    <property type="evidence" value="ECO:0007669"/>
    <property type="project" value="UniProtKB-SubCell"/>
</dbReference>
<dbReference type="GO" id="GO:0006488">
    <property type="term" value="P:dolichol-linked oligosaccharide biosynthetic process"/>
    <property type="evidence" value="ECO:0000250"/>
    <property type="project" value="UniProtKB"/>
</dbReference>
<dbReference type="GO" id="GO:0034203">
    <property type="term" value="P:glycolipid translocation"/>
    <property type="evidence" value="ECO:0000250"/>
    <property type="project" value="UniProtKB"/>
</dbReference>
<dbReference type="GO" id="GO:0006487">
    <property type="term" value="P:protein N-linked glycosylation"/>
    <property type="evidence" value="ECO:0000250"/>
    <property type="project" value="UniProtKB"/>
</dbReference>
<dbReference type="InterPro" id="IPR007594">
    <property type="entry name" value="RFT1"/>
</dbReference>
<dbReference type="PANTHER" id="PTHR13117">
    <property type="entry name" value="ENDOPLASMIC RETICULUM MULTISPAN TRANSMEMBRANE PROTEIN-RELATED"/>
    <property type="match status" value="1"/>
</dbReference>
<dbReference type="PANTHER" id="PTHR13117:SF5">
    <property type="entry name" value="PROTEIN RFT1 HOMOLOG"/>
    <property type="match status" value="1"/>
</dbReference>
<dbReference type="Pfam" id="PF04506">
    <property type="entry name" value="Rft-1"/>
    <property type="match status" value="1"/>
</dbReference>
<proteinExistence type="inferred from homology"/>
<gene>
    <name type="primary">RFT1</name>
    <name type="ordered locus">KLLA0E10439g</name>
</gene>
<keyword id="KW-0256">Endoplasmic reticulum</keyword>
<keyword id="KW-0472">Membrane</keyword>
<keyword id="KW-1185">Reference proteome</keyword>
<keyword id="KW-0762">Sugar transport</keyword>
<keyword id="KW-0812">Transmembrane</keyword>
<keyword id="KW-1133">Transmembrane helix</keyword>
<keyword id="KW-0813">Transport</keyword>
<feature type="chain" id="PRO_0000212417" description="Man(5)GlcNAc(2)-PP-dolichol translocation protein RFT1">
    <location>
        <begin position="1"/>
        <end position="556"/>
    </location>
</feature>
<feature type="transmembrane region" description="Helical" evidence="2">
    <location>
        <begin position="11"/>
        <end position="31"/>
    </location>
</feature>
<feature type="transmembrane region" description="Helical" evidence="2">
    <location>
        <begin position="41"/>
        <end position="61"/>
    </location>
</feature>
<feature type="transmembrane region" description="Helical" evidence="2">
    <location>
        <begin position="97"/>
        <end position="117"/>
    </location>
</feature>
<feature type="transmembrane region" description="Helical" evidence="2">
    <location>
        <begin position="136"/>
        <end position="156"/>
    </location>
</feature>
<feature type="transmembrane region" description="Helical" evidence="2">
    <location>
        <begin position="172"/>
        <end position="192"/>
    </location>
</feature>
<feature type="transmembrane region" description="Helical" evidence="2">
    <location>
        <begin position="207"/>
        <end position="227"/>
    </location>
</feature>
<feature type="transmembrane region" description="Helical" evidence="2">
    <location>
        <begin position="300"/>
        <end position="320"/>
    </location>
</feature>
<feature type="transmembrane region" description="Helical" evidence="2">
    <location>
        <begin position="353"/>
        <end position="373"/>
    </location>
</feature>
<feature type="transmembrane region" description="Helical" evidence="2">
    <location>
        <begin position="394"/>
        <end position="414"/>
    </location>
</feature>
<feature type="transmembrane region" description="Helical" evidence="2">
    <location>
        <begin position="424"/>
        <end position="444"/>
    </location>
</feature>
<feature type="transmembrane region" description="Helical" evidence="2">
    <location>
        <begin position="450"/>
        <end position="470"/>
    </location>
</feature>
<feature type="transmembrane region" description="Helical" evidence="2">
    <location>
        <begin position="499"/>
        <end position="519"/>
    </location>
</feature>
<feature type="transmembrane region" description="Helical" evidence="2">
    <location>
        <begin position="525"/>
        <end position="545"/>
    </location>
</feature>
<feature type="sequence conflict" description="In Ref. 2; AAC41661." evidence="3" ref="2">
    <original>RLLSVSS</original>
    <variation>ALLRLCC</variation>
    <location>
        <begin position="330"/>
        <end position="336"/>
    </location>
</feature>
<feature type="sequence conflict" description="In Ref. 2." evidence="3" ref="2">
    <original>SGD</original>
    <variation>PVI</variation>
    <location>
        <begin position="415"/>
        <end position="417"/>
    </location>
</feature>
<accession>P40913</accession>
<accession>Q6CNR7</accession>